<dbReference type="EMBL" id="FO081380">
    <property type="protein sequence ID" value="CCD71197.1"/>
    <property type="molecule type" value="Genomic_DNA"/>
</dbReference>
<dbReference type="PIR" id="S44856">
    <property type="entry name" value="S44856"/>
</dbReference>
<dbReference type="RefSeq" id="NP_498754.1">
    <property type="nucleotide sequence ID" value="NM_066353.7"/>
</dbReference>
<dbReference type="BioGRID" id="52038">
    <property type="interactions" value="4"/>
</dbReference>
<dbReference type="DIP" id="DIP-25578N"/>
<dbReference type="FunCoup" id="P34526">
    <property type="interactions" value="149"/>
</dbReference>
<dbReference type="STRING" id="6239.K12H4.5.1"/>
<dbReference type="PaxDb" id="6239-K12H4.5"/>
<dbReference type="PeptideAtlas" id="P34526"/>
<dbReference type="EnsemblMetazoa" id="K12H4.5.1">
    <property type="protein sequence ID" value="K12H4.5.1"/>
    <property type="gene ID" value="WBGene00019680"/>
</dbReference>
<dbReference type="GeneID" id="187337"/>
<dbReference type="KEGG" id="cel:CELE_K12H4.5"/>
<dbReference type="UCSC" id="K12H4.5.1">
    <property type="organism name" value="c. elegans"/>
</dbReference>
<dbReference type="AGR" id="WB:WBGene00019680"/>
<dbReference type="CTD" id="187337"/>
<dbReference type="WormBase" id="K12H4.5">
    <property type="protein sequence ID" value="CE00270"/>
    <property type="gene ID" value="WBGene00019680"/>
</dbReference>
<dbReference type="eggNOG" id="ENOG502SGU5">
    <property type="taxonomic scope" value="Eukaryota"/>
</dbReference>
<dbReference type="HOGENOM" id="CLU_186327_0_0_1"/>
<dbReference type="InParanoid" id="P34526"/>
<dbReference type="OMA" id="PIAINWR"/>
<dbReference type="OrthoDB" id="5786237at2759"/>
<dbReference type="PRO" id="PR:P34526"/>
<dbReference type="Proteomes" id="UP000001940">
    <property type="component" value="Chromosome III"/>
</dbReference>
<dbReference type="Bgee" id="WBGene00019680">
    <property type="expression patterns" value="Expressed in larva and 4 other cell types or tissues"/>
</dbReference>
<reference key="1">
    <citation type="journal article" date="1994" name="Nature">
        <title>2.2 Mb of contiguous nucleotide sequence from chromosome III of C. elegans.</title>
        <authorList>
            <person name="Wilson R."/>
            <person name="Ainscough R."/>
            <person name="Anderson K."/>
            <person name="Baynes C."/>
            <person name="Berks M."/>
            <person name="Bonfield J."/>
            <person name="Burton J."/>
            <person name="Connell M."/>
            <person name="Copsey T."/>
            <person name="Cooper J."/>
            <person name="Coulson A."/>
            <person name="Craxton M."/>
            <person name="Dear S."/>
            <person name="Du Z."/>
            <person name="Durbin R."/>
            <person name="Favello A."/>
            <person name="Fraser A."/>
            <person name="Fulton L."/>
            <person name="Gardner A."/>
            <person name="Green P."/>
            <person name="Hawkins T."/>
            <person name="Hillier L."/>
            <person name="Jier M."/>
            <person name="Johnston L."/>
            <person name="Jones M."/>
            <person name="Kershaw J."/>
            <person name="Kirsten J."/>
            <person name="Laisster N."/>
            <person name="Latreille P."/>
            <person name="Lightning J."/>
            <person name="Lloyd C."/>
            <person name="Mortimore B."/>
            <person name="O'Callaghan M."/>
            <person name="Parsons J."/>
            <person name="Percy C."/>
            <person name="Rifken L."/>
            <person name="Roopra A."/>
            <person name="Saunders D."/>
            <person name="Shownkeen R."/>
            <person name="Sims M."/>
            <person name="Smaldon N."/>
            <person name="Smith A."/>
            <person name="Smith M."/>
            <person name="Sonnhammer E."/>
            <person name="Staden R."/>
            <person name="Sulston J."/>
            <person name="Thierry-Mieg J."/>
            <person name="Thomas K."/>
            <person name="Vaudin M."/>
            <person name="Vaughan K."/>
            <person name="Waterston R."/>
            <person name="Watson A."/>
            <person name="Weinstock L."/>
            <person name="Wilkinson-Sproat J."/>
            <person name="Wohldman P."/>
        </authorList>
    </citation>
    <scope>NUCLEOTIDE SEQUENCE [LARGE SCALE GENOMIC DNA]</scope>
    <source>
        <strain>Bristol N2</strain>
    </source>
</reference>
<reference key="2">
    <citation type="journal article" date="1998" name="Science">
        <title>Genome sequence of the nematode C. elegans: a platform for investigating biology.</title>
        <authorList>
            <consortium name="The C. elegans sequencing consortium"/>
        </authorList>
    </citation>
    <scope>NUCLEOTIDE SEQUENCE [LARGE SCALE GENOMIC DNA]</scope>
    <source>
        <strain>Bristol N2</strain>
    </source>
</reference>
<feature type="chain" id="PRO_0000065412" description="Uncharacterized protein K12H4.5">
    <location>
        <begin position="1"/>
        <end position="97"/>
    </location>
</feature>
<proteinExistence type="predicted"/>
<protein>
    <recommendedName>
        <fullName>Uncharacterized protein K12H4.5</fullName>
    </recommendedName>
</protein>
<keyword id="KW-1185">Reference proteome</keyword>
<name>YM65_CAEEL</name>
<accession>P34526</accession>
<gene>
    <name type="ORF">K12H4.5</name>
</gene>
<organism>
    <name type="scientific">Caenorhabditis elegans</name>
    <dbReference type="NCBI Taxonomy" id="6239"/>
    <lineage>
        <taxon>Eukaryota</taxon>
        <taxon>Metazoa</taxon>
        <taxon>Ecdysozoa</taxon>
        <taxon>Nematoda</taxon>
        <taxon>Chromadorea</taxon>
        <taxon>Rhabditida</taxon>
        <taxon>Rhabditina</taxon>
        <taxon>Rhabditomorpha</taxon>
        <taxon>Rhabditoidea</taxon>
        <taxon>Rhabditidae</taxon>
        <taxon>Peloderinae</taxon>
        <taxon>Caenorhabditis</taxon>
    </lineage>
</organism>
<sequence>MIKYHVSRSARLWAYWSTLPHRMLKKYPEQTIFYATFGVATLLIGGYKMKKYLTESDKPFYRGYYDVVRSNDPIAQNWRKPEEYPAPYLLSSVETAH</sequence>